<organism>
    <name type="scientific">Pseudomonas aeruginosa (strain UCBPP-PA14)</name>
    <dbReference type="NCBI Taxonomy" id="208963"/>
    <lineage>
        <taxon>Bacteria</taxon>
        <taxon>Pseudomonadati</taxon>
        <taxon>Pseudomonadota</taxon>
        <taxon>Gammaproteobacteria</taxon>
        <taxon>Pseudomonadales</taxon>
        <taxon>Pseudomonadaceae</taxon>
        <taxon>Pseudomonas</taxon>
    </lineage>
</organism>
<proteinExistence type="inferred from homology"/>
<reference key="1">
    <citation type="journal article" date="2006" name="Genome Biol.">
        <title>Genomic analysis reveals that Pseudomonas aeruginosa virulence is combinatorial.</title>
        <authorList>
            <person name="Lee D.G."/>
            <person name="Urbach J.M."/>
            <person name="Wu G."/>
            <person name="Liberati N.T."/>
            <person name="Feinbaum R.L."/>
            <person name="Miyata S."/>
            <person name="Diggins L.T."/>
            <person name="He J."/>
            <person name="Saucier M."/>
            <person name="Deziel E."/>
            <person name="Friedman L."/>
            <person name="Li L."/>
            <person name="Grills G."/>
            <person name="Montgomery K."/>
            <person name="Kucherlapati R."/>
            <person name="Rahme L.G."/>
            <person name="Ausubel F.M."/>
        </authorList>
    </citation>
    <scope>NUCLEOTIDE SEQUENCE [LARGE SCALE GENOMIC DNA]</scope>
    <source>
        <strain>UCBPP-PA14</strain>
    </source>
</reference>
<name>GCH4_PSEAB</name>
<sequence length="298" mass="32469">MNALTLPDIARQTTTADLPLDWVGMQGIALPVQIGGQRVAAEADAGVSLDDPQARGIHMSRLYLALAELEQGELDLSRLRAVLQRFLDSHAGLSRRAYLRLRLAPLLRRPALVSPLSGWKRYPLVLDTRLEGDDFQAEVHLELTYSSTCPCSAALARQLIQERFDQDFAGQPLDHASVLAWLGSSAGIVATPHSQRSSAHLRIGLAEDCIGLPLEELADLGESALGTAVQTAVKRADEQAFALANGQNLMFCEDAVRRLHRALQGYPQASRFSIRVVHAESLHAHDAVAESHWQRGAA</sequence>
<comment type="function">
    <text evidence="1">Converts GTP to 7,8-dihydroneopterin triphosphate.</text>
</comment>
<comment type="catalytic activity">
    <reaction evidence="1">
        <text>GTP + H2O = 7,8-dihydroneopterin 3'-triphosphate + formate + H(+)</text>
        <dbReference type="Rhea" id="RHEA:17473"/>
        <dbReference type="ChEBI" id="CHEBI:15377"/>
        <dbReference type="ChEBI" id="CHEBI:15378"/>
        <dbReference type="ChEBI" id="CHEBI:15740"/>
        <dbReference type="ChEBI" id="CHEBI:37565"/>
        <dbReference type="ChEBI" id="CHEBI:58462"/>
        <dbReference type="EC" id="3.5.4.16"/>
    </reaction>
</comment>
<comment type="pathway">
    <text evidence="1">Cofactor biosynthesis; 7,8-dihydroneopterin triphosphate biosynthesis; 7,8-dihydroneopterin triphosphate from GTP: step 1/1.</text>
</comment>
<comment type="similarity">
    <text evidence="1">Belongs to the GTP cyclohydrolase IV family.</text>
</comment>
<accession>Q02DG9</accession>
<feature type="chain" id="PRO_0000289507" description="GTP cyclohydrolase FolE2">
    <location>
        <begin position="1"/>
        <end position="298"/>
    </location>
</feature>
<feature type="site" description="May be catalytically important" evidence="1">
    <location>
        <position position="149"/>
    </location>
</feature>
<protein>
    <recommendedName>
        <fullName evidence="1">GTP cyclohydrolase FolE2</fullName>
        <ecNumber evidence="1">3.5.4.16</ecNumber>
    </recommendedName>
</protein>
<gene>
    <name evidence="1" type="primary">folE2</name>
    <name type="ordered locus">PA14_73050</name>
</gene>
<dbReference type="EC" id="3.5.4.16" evidence="1"/>
<dbReference type="EMBL" id="CP000438">
    <property type="protein sequence ID" value="ABJ14926.1"/>
    <property type="molecule type" value="Genomic_DNA"/>
</dbReference>
<dbReference type="RefSeq" id="WP_003142159.1">
    <property type="nucleotide sequence ID" value="NZ_CP034244.1"/>
</dbReference>
<dbReference type="SMR" id="Q02DG9"/>
<dbReference type="KEGG" id="pau:PA14_73050"/>
<dbReference type="PseudoCAP" id="PA14_73050"/>
<dbReference type="HOGENOM" id="CLU_062816_0_0_6"/>
<dbReference type="BioCyc" id="PAER208963:G1G74-6146-MONOMER"/>
<dbReference type="UniPathway" id="UPA00848">
    <property type="reaction ID" value="UER00151"/>
</dbReference>
<dbReference type="Proteomes" id="UP000000653">
    <property type="component" value="Chromosome"/>
</dbReference>
<dbReference type="GO" id="GO:0003934">
    <property type="term" value="F:GTP cyclohydrolase I activity"/>
    <property type="evidence" value="ECO:0007669"/>
    <property type="project" value="UniProtKB-UniRule"/>
</dbReference>
<dbReference type="GO" id="GO:0046654">
    <property type="term" value="P:tetrahydrofolate biosynthetic process"/>
    <property type="evidence" value="ECO:0007669"/>
    <property type="project" value="UniProtKB-UniRule"/>
</dbReference>
<dbReference type="Gene3D" id="3.10.270.10">
    <property type="entry name" value="Urate Oxidase"/>
    <property type="match status" value="1"/>
</dbReference>
<dbReference type="HAMAP" id="MF_01527_B">
    <property type="entry name" value="GTP_cyclohydrol_B"/>
    <property type="match status" value="1"/>
</dbReference>
<dbReference type="InterPro" id="IPR022838">
    <property type="entry name" value="GTP_cyclohydrolase_FolE2"/>
</dbReference>
<dbReference type="InterPro" id="IPR003801">
    <property type="entry name" value="GTP_cyclohydrolase_FolE2/MptA"/>
</dbReference>
<dbReference type="NCBIfam" id="NF010200">
    <property type="entry name" value="PRK13674.1-1"/>
    <property type="match status" value="1"/>
</dbReference>
<dbReference type="PANTHER" id="PTHR36445">
    <property type="entry name" value="GTP CYCLOHYDROLASE MPTA"/>
    <property type="match status" value="1"/>
</dbReference>
<dbReference type="PANTHER" id="PTHR36445:SF1">
    <property type="entry name" value="GTP CYCLOHYDROLASE MPTA"/>
    <property type="match status" value="1"/>
</dbReference>
<dbReference type="Pfam" id="PF02649">
    <property type="entry name" value="GCHY-1"/>
    <property type="match status" value="1"/>
</dbReference>
<keyword id="KW-0378">Hydrolase</keyword>
<evidence type="ECO:0000255" key="1">
    <source>
        <dbReference type="HAMAP-Rule" id="MF_01527"/>
    </source>
</evidence>